<protein>
    <recommendedName>
        <fullName>Thrombin-like enzyme gabonase</fullName>
        <shortName>SVTLE</shortName>
        <ecNumber>3.4.21.55</ecNumber>
    </recommendedName>
    <alternativeName>
        <fullName>Fibrinogen-clotting enzyme</fullName>
    </alternativeName>
    <alternativeName>
        <fullName>Snake venom serine protease</fullName>
        <shortName>SVSP</shortName>
    </alternativeName>
    <alternativeName>
        <fullName>Venombin-AB</fullName>
    </alternativeName>
</protein>
<name>VSPG_BITGA</name>
<proteinExistence type="evidence at protein level"/>
<feature type="chain" id="PRO_0000295177" description="Thrombin-like enzyme gabonase">
    <location>
        <begin position="1"/>
        <end position="19" status="greater than"/>
    </location>
</feature>
<feature type="domain" description="Peptidase S1" evidence="1">
    <location>
        <begin position="1"/>
        <end position="19" status="greater than"/>
    </location>
</feature>
<feature type="non-terminal residue">
    <location>
        <position position="19"/>
    </location>
</feature>
<organism>
    <name type="scientific">Bitis gabonica</name>
    <name type="common">Gaboon adder</name>
    <name type="synonym">Gaboon viper</name>
    <dbReference type="NCBI Taxonomy" id="8694"/>
    <lineage>
        <taxon>Eukaryota</taxon>
        <taxon>Metazoa</taxon>
        <taxon>Chordata</taxon>
        <taxon>Craniata</taxon>
        <taxon>Vertebrata</taxon>
        <taxon>Euteleostomi</taxon>
        <taxon>Lepidosauria</taxon>
        <taxon>Squamata</taxon>
        <taxon>Bifurcata</taxon>
        <taxon>Unidentata</taxon>
        <taxon>Episquamata</taxon>
        <taxon>Toxicofera</taxon>
        <taxon>Serpentes</taxon>
        <taxon>Colubroidea</taxon>
        <taxon>Viperidae</taxon>
        <taxon>Viperinae</taxon>
        <taxon>Bitis</taxon>
    </lineage>
</organism>
<comment type="function">
    <text>Thrombin-like snake venom serine protease. Releases both fibrinopeptides A and B from fibrinogen (FGA and FGB) to form fibrin clots. Also activates factor XIII (F13A). The activity of the enzyme is stabilized by calcium ion.</text>
</comment>
<comment type="catalytic activity">
    <reaction>
        <text>Preferential cleavage: Arg-|-Xaa bonds in fibrinogen to form fibrin and release fibrinopeptides A and B.</text>
        <dbReference type="EC" id="3.4.21.55"/>
    </reaction>
</comment>
<comment type="activity regulation">
    <text evidence="2">Inhibited by PMSF, but not by heparin, hirudin and antithrombin-III.</text>
</comment>
<comment type="biophysicochemical properties">
    <kinetics>
        <KM evidence="2">0.12 mM for Tosyl-L-arginine methyl ester (TAME)</KM>
        <KM evidence="2">0.13 mM for Tosyl-Gly-Pro-Arg 4-nitroanilide</KM>
        <KM evidence="2">0.82 mM for H-D-Pro-hexahydrotyrosyl-Arg 4-nitroanilide</KM>
        <KM evidence="2">0.88 mM for H-D-Hexahydrotyrosyl-Ala-Arg 4-nitroanilide</KM>
        <KM evidence="2">2.72 mM for Tosyl-Gly-Pro-Lys 4-nitroanilide</KM>
        <KM evidence="2">3.4 mM for H-D-Phenylglycine-Phe-Arg 4-nitroanilide</KM>
    </kinetics>
    <temperatureDependence>
        <text evidence="2">Optimum temperature is 30 degrees Celsius with tosyl-Arg-methyl ester (TAME) as substrate and 37 degrees Celsius with natural substrates.</text>
    </temperatureDependence>
</comment>
<comment type="subunit">
    <text evidence="2">Monomer.</text>
</comment>
<comment type="subcellular location">
    <subcellularLocation>
        <location>Secreted</location>
    </subcellularLocation>
</comment>
<comment type="tissue specificity">
    <text>Expressed by the venom gland.</text>
</comment>
<comment type="PTM">
    <text>Glycosylated.</text>
</comment>
<comment type="PTM">
    <text evidence="3">Contains five disulfide bonds.</text>
</comment>
<comment type="similarity">
    <text evidence="1">Belongs to the peptidase S1 family. Snake venom subfamily.</text>
</comment>
<accession>P0C577</accession>
<sequence length="19" mass="2017">VVGGAECKIDGHRCLALLY</sequence>
<dbReference type="EC" id="3.4.21.55"/>
<dbReference type="GO" id="GO:0005576">
    <property type="term" value="C:extracellular region"/>
    <property type="evidence" value="ECO:0007669"/>
    <property type="project" value="UniProtKB-SubCell"/>
</dbReference>
<dbReference type="GO" id="GO:0008236">
    <property type="term" value="F:serine-type peptidase activity"/>
    <property type="evidence" value="ECO:0007669"/>
    <property type="project" value="UniProtKB-KW"/>
</dbReference>
<dbReference type="GO" id="GO:0090729">
    <property type="term" value="F:toxin activity"/>
    <property type="evidence" value="ECO:0007669"/>
    <property type="project" value="UniProtKB-KW"/>
</dbReference>
<dbReference type="GO" id="GO:0006508">
    <property type="term" value="P:proteolysis"/>
    <property type="evidence" value="ECO:0007669"/>
    <property type="project" value="UniProtKB-KW"/>
</dbReference>
<keyword id="KW-1204">Blood coagulation cascade activating toxin</keyword>
<keyword id="KW-0106">Calcium</keyword>
<keyword id="KW-0903">Direct protein sequencing</keyword>
<keyword id="KW-1015">Disulfide bond</keyword>
<keyword id="KW-0325">Glycoprotein</keyword>
<keyword id="KW-1199">Hemostasis impairing toxin</keyword>
<keyword id="KW-0378">Hydrolase</keyword>
<keyword id="KW-0645">Protease</keyword>
<keyword id="KW-0964">Secreted</keyword>
<keyword id="KW-0720">Serine protease</keyword>
<keyword id="KW-0800">Toxin</keyword>
<evidence type="ECO:0000255" key="1">
    <source>
        <dbReference type="PROSITE-ProRule" id="PRU00274"/>
    </source>
</evidence>
<evidence type="ECO:0000269" key="2">
    <source>
    </source>
</evidence>
<evidence type="ECO:0000305" key="3"/>
<reference key="1">
    <citation type="journal article" date="1986" name="J. Biol. Chem.">
        <title>Thrombin-like enzyme from the venom of Bitis gabonica. Purification, properties, and coagulant actions.</title>
        <authorList>
            <person name="Pirkle H."/>
            <person name="Theodor I."/>
            <person name="Miyada D."/>
            <person name="Simmons G."/>
        </authorList>
    </citation>
    <scope>PROTEIN SEQUENCE</scope>
    <scope>ACTIVITY REGULATION</scope>
    <scope>BIOPHYSICOCHEMICAL PROPERTIES</scope>
    <scope>SUBUNIT</scope>
    <source>
        <tissue>Venom</tissue>
    </source>
</reference>